<dbReference type="EMBL" id="AP006627">
    <property type="protein sequence ID" value="BAD66399.1"/>
    <property type="molecule type" value="Genomic_DNA"/>
</dbReference>
<dbReference type="RefSeq" id="WP_011248702.1">
    <property type="nucleotide sequence ID" value="NC_006582.1"/>
</dbReference>
<dbReference type="STRING" id="66692.ABC3868"/>
<dbReference type="KEGG" id="bcl:ABC3868"/>
<dbReference type="eggNOG" id="COG1971">
    <property type="taxonomic scope" value="Bacteria"/>
</dbReference>
<dbReference type="HOGENOM" id="CLU_096410_1_0_9"/>
<dbReference type="OrthoDB" id="1679700at2"/>
<dbReference type="Proteomes" id="UP000001168">
    <property type="component" value="Chromosome"/>
</dbReference>
<dbReference type="GO" id="GO:0005886">
    <property type="term" value="C:plasma membrane"/>
    <property type="evidence" value="ECO:0007669"/>
    <property type="project" value="UniProtKB-SubCell"/>
</dbReference>
<dbReference type="GO" id="GO:0005384">
    <property type="term" value="F:manganese ion transmembrane transporter activity"/>
    <property type="evidence" value="ECO:0007669"/>
    <property type="project" value="UniProtKB-UniRule"/>
</dbReference>
<dbReference type="HAMAP" id="MF_01521">
    <property type="entry name" value="MntP_pump"/>
    <property type="match status" value="1"/>
</dbReference>
<dbReference type="InterPro" id="IPR003810">
    <property type="entry name" value="Mntp/YtaF"/>
</dbReference>
<dbReference type="InterPro" id="IPR022929">
    <property type="entry name" value="Put_MntP"/>
</dbReference>
<dbReference type="PANTHER" id="PTHR35529">
    <property type="entry name" value="MANGANESE EFFLUX PUMP MNTP-RELATED"/>
    <property type="match status" value="1"/>
</dbReference>
<dbReference type="PANTHER" id="PTHR35529:SF1">
    <property type="entry name" value="MANGANESE EFFLUX PUMP MNTP-RELATED"/>
    <property type="match status" value="1"/>
</dbReference>
<dbReference type="Pfam" id="PF02659">
    <property type="entry name" value="Mntp"/>
    <property type="match status" value="1"/>
</dbReference>
<reference key="1">
    <citation type="submission" date="2003-10" db="EMBL/GenBank/DDBJ databases">
        <title>The complete genome sequence of the alkaliphilic Bacillus clausii KSM-K16.</title>
        <authorList>
            <person name="Takaki Y."/>
            <person name="Kageyama Y."/>
            <person name="Shimamura S."/>
            <person name="Suzuki H."/>
            <person name="Nishi S."/>
            <person name="Hatada Y."/>
            <person name="Kawai S."/>
            <person name="Ito S."/>
            <person name="Horikoshi K."/>
        </authorList>
    </citation>
    <scope>NUCLEOTIDE SEQUENCE [LARGE SCALE GENOMIC DNA]</scope>
    <source>
        <strain>KSM-K16</strain>
    </source>
</reference>
<gene>
    <name evidence="1" type="primary">mntP</name>
    <name type="ordered locus">ABC3868</name>
</gene>
<proteinExistence type="inferred from homology"/>
<name>MNTP_SHOC1</name>
<organism>
    <name type="scientific">Shouchella clausii (strain KSM-K16)</name>
    <name type="common">Alkalihalobacillus clausii</name>
    <dbReference type="NCBI Taxonomy" id="66692"/>
    <lineage>
        <taxon>Bacteria</taxon>
        <taxon>Bacillati</taxon>
        <taxon>Bacillota</taxon>
        <taxon>Bacilli</taxon>
        <taxon>Bacillales</taxon>
        <taxon>Bacillaceae</taxon>
        <taxon>Shouchella</taxon>
    </lineage>
</organism>
<keyword id="KW-1003">Cell membrane</keyword>
<keyword id="KW-0406">Ion transport</keyword>
<keyword id="KW-0464">Manganese</keyword>
<keyword id="KW-0472">Membrane</keyword>
<keyword id="KW-1185">Reference proteome</keyword>
<keyword id="KW-0812">Transmembrane</keyword>
<keyword id="KW-1133">Transmembrane helix</keyword>
<keyword id="KW-0813">Transport</keyword>
<feature type="chain" id="PRO_0000155636" description="Putative manganese efflux pump MntP">
    <location>
        <begin position="1"/>
        <end position="180"/>
    </location>
</feature>
<feature type="transmembrane region" description="Helical" evidence="1">
    <location>
        <begin position="4"/>
        <end position="24"/>
    </location>
</feature>
<feature type="transmembrane region" description="Helical" evidence="1">
    <location>
        <begin position="40"/>
        <end position="60"/>
    </location>
</feature>
<feature type="transmembrane region" description="Helical" evidence="1">
    <location>
        <begin position="64"/>
        <end position="84"/>
    </location>
</feature>
<feature type="transmembrane region" description="Helical" evidence="1">
    <location>
        <begin position="103"/>
        <end position="123"/>
    </location>
</feature>
<feature type="transmembrane region" description="Helical" evidence="1">
    <location>
        <begin position="129"/>
        <end position="149"/>
    </location>
</feature>
<feature type="transmembrane region" description="Helical" evidence="1">
    <location>
        <begin position="156"/>
        <end position="176"/>
    </location>
</feature>
<accession>Q5WB61</accession>
<evidence type="ECO:0000255" key="1">
    <source>
        <dbReference type="HAMAP-Rule" id="MF_01521"/>
    </source>
</evidence>
<comment type="function">
    <text evidence="1">Probably functions as a manganese efflux pump.</text>
</comment>
<comment type="subcellular location">
    <subcellularLocation>
        <location evidence="1">Cell membrane</location>
        <topology evidence="1">Multi-pass membrane protein</topology>
    </subcellularLocation>
</comment>
<comment type="similarity">
    <text evidence="1">Belongs to the MntP (TC 9.B.29) family.</text>
</comment>
<protein>
    <recommendedName>
        <fullName evidence="1">Putative manganese efflux pump MntP</fullName>
    </recommendedName>
</protein>
<sequence>MHEFVTICIMAAALGMDAFSVALGMGMLKLSGKQIFRIGLTIGLFHVAMPLAGMAVGKWLSGHFDVIATYIGGGLLLVIGVQMALNAFSDHEAEGLKPAGWGLLLFAVGVSLDSFSAGLSFGILGTEMFVTVGMIGAMSMVMSWIGLIVGSHFQKFLGAYGELLGGLVLIGFGLKIMLPL</sequence>